<feature type="chain" id="PRO_0000061352" description="Cytochrome b">
    <location>
        <begin position="1"/>
        <end position="380"/>
    </location>
</feature>
<feature type="transmembrane region" description="Helical" evidence="2">
    <location>
        <begin position="34"/>
        <end position="54"/>
    </location>
</feature>
<feature type="transmembrane region" description="Helical" evidence="2">
    <location>
        <begin position="78"/>
        <end position="99"/>
    </location>
</feature>
<feature type="transmembrane region" description="Helical" evidence="2">
    <location>
        <begin position="114"/>
        <end position="134"/>
    </location>
</feature>
<feature type="transmembrane region" description="Helical" evidence="2">
    <location>
        <begin position="179"/>
        <end position="199"/>
    </location>
</feature>
<feature type="transmembrane region" description="Helical" evidence="2">
    <location>
        <begin position="227"/>
        <end position="247"/>
    </location>
</feature>
<feature type="transmembrane region" description="Helical" evidence="2">
    <location>
        <begin position="289"/>
        <end position="309"/>
    </location>
</feature>
<feature type="transmembrane region" description="Helical" evidence="2">
    <location>
        <begin position="321"/>
        <end position="341"/>
    </location>
</feature>
<feature type="transmembrane region" description="Helical" evidence="2">
    <location>
        <begin position="348"/>
        <end position="368"/>
    </location>
</feature>
<feature type="binding site" description="axial binding residue" evidence="2">
    <location>
        <position position="84"/>
    </location>
    <ligand>
        <name>heme b</name>
        <dbReference type="ChEBI" id="CHEBI:60344"/>
        <label>b562</label>
    </ligand>
    <ligandPart>
        <name>Fe</name>
        <dbReference type="ChEBI" id="CHEBI:18248"/>
    </ligandPart>
</feature>
<feature type="binding site" description="axial binding residue" evidence="2">
    <location>
        <position position="98"/>
    </location>
    <ligand>
        <name>heme b</name>
        <dbReference type="ChEBI" id="CHEBI:60344"/>
        <label>b566</label>
    </ligand>
    <ligandPart>
        <name>Fe</name>
        <dbReference type="ChEBI" id="CHEBI:18248"/>
    </ligandPart>
</feature>
<feature type="binding site" description="axial binding residue" evidence="2">
    <location>
        <position position="183"/>
    </location>
    <ligand>
        <name>heme b</name>
        <dbReference type="ChEBI" id="CHEBI:60344"/>
        <label>b562</label>
    </ligand>
    <ligandPart>
        <name>Fe</name>
        <dbReference type="ChEBI" id="CHEBI:18248"/>
    </ligandPart>
</feature>
<feature type="binding site" description="axial binding residue" evidence="2">
    <location>
        <position position="197"/>
    </location>
    <ligand>
        <name>heme b</name>
        <dbReference type="ChEBI" id="CHEBI:60344"/>
        <label>b566</label>
    </ligand>
    <ligandPart>
        <name>Fe</name>
        <dbReference type="ChEBI" id="CHEBI:18248"/>
    </ligandPart>
</feature>
<feature type="binding site" evidence="2">
    <location>
        <position position="202"/>
    </location>
    <ligand>
        <name>a ubiquinone</name>
        <dbReference type="ChEBI" id="CHEBI:16389"/>
    </ligand>
</feature>
<organism>
    <name type="scientific">Paradisaea minor</name>
    <name type="common">Lesser bird of paradise</name>
    <dbReference type="NCBI Taxonomy" id="39964"/>
    <lineage>
        <taxon>Eukaryota</taxon>
        <taxon>Metazoa</taxon>
        <taxon>Chordata</taxon>
        <taxon>Craniata</taxon>
        <taxon>Vertebrata</taxon>
        <taxon>Euteleostomi</taxon>
        <taxon>Archelosauria</taxon>
        <taxon>Archosauria</taxon>
        <taxon>Dinosauria</taxon>
        <taxon>Saurischia</taxon>
        <taxon>Theropoda</taxon>
        <taxon>Coelurosauria</taxon>
        <taxon>Aves</taxon>
        <taxon>Neognathae</taxon>
        <taxon>Neoaves</taxon>
        <taxon>Telluraves</taxon>
        <taxon>Australaves</taxon>
        <taxon>Passeriformes</taxon>
        <taxon>Corvoidea</taxon>
        <taxon>Paradisaeidae</taxon>
        <taxon>Paradisaea</taxon>
    </lineage>
</organism>
<name>CYB_PARMI</name>
<gene>
    <name type="primary">MT-CYB</name>
    <name type="synonym">COB</name>
    <name type="synonym">CYTB</name>
    <name type="synonym">MTCYB</name>
</gene>
<sequence>MALNLRKNHPLLKIINDSLIDLPTPSNISIWWNFGSLLGICLVTQIITGLLLAAHYTADTSLAFNSVAHMCRNVQFGWLIRNLHANGASLFFICIYLHIGRGFYYGSYLNKETWNIGVILLLTLMATAFVGYVLPWGQMSFWGATVITNLFSAIPYIGQTLVEWAWGGFSVDNPTLTRFFALHFLLPFVIAGLTLVHLTFLHETGSNNPLGIPSDCDKIPFHPYYSIKDILGFALMLISLATLALFSPNLLGDPENFTPANPLATPPHIKPEWYFLFAYAILRSIPNKLGGVLALAASVLVLFLIPLLHTSKQRSMTFRPLSQILFWILVTDLLILTWVGSQPVEHPFIIIGQLASFLYFTIILVLFPIVGALENKLLNL</sequence>
<keyword id="KW-0249">Electron transport</keyword>
<keyword id="KW-0349">Heme</keyword>
<keyword id="KW-0408">Iron</keyword>
<keyword id="KW-0472">Membrane</keyword>
<keyword id="KW-0479">Metal-binding</keyword>
<keyword id="KW-0496">Mitochondrion</keyword>
<keyword id="KW-0999">Mitochondrion inner membrane</keyword>
<keyword id="KW-0679">Respiratory chain</keyword>
<keyword id="KW-0812">Transmembrane</keyword>
<keyword id="KW-1133">Transmembrane helix</keyword>
<keyword id="KW-0813">Transport</keyword>
<keyword id="KW-0830">Ubiquinone</keyword>
<evidence type="ECO:0000250" key="1"/>
<evidence type="ECO:0000250" key="2">
    <source>
        <dbReference type="UniProtKB" id="P00157"/>
    </source>
</evidence>
<evidence type="ECO:0000255" key="3">
    <source>
        <dbReference type="PROSITE-ProRule" id="PRU00967"/>
    </source>
</evidence>
<evidence type="ECO:0000255" key="4">
    <source>
        <dbReference type="PROSITE-ProRule" id="PRU00968"/>
    </source>
</evidence>
<geneLocation type="mitochondrion"/>
<comment type="function">
    <text evidence="2">Component of the ubiquinol-cytochrome c reductase complex (complex III or cytochrome b-c1 complex) that is part of the mitochondrial respiratory chain. The b-c1 complex mediates electron transfer from ubiquinol to cytochrome c. Contributes to the generation of a proton gradient across the mitochondrial membrane that is then used for ATP synthesis.</text>
</comment>
<comment type="cofactor">
    <cofactor evidence="2">
        <name>heme b</name>
        <dbReference type="ChEBI" id="CHEBI:60344"/>
    </cofactor>
    <text evidence="2">Binds 2 heme b groups non-covalently.</text>
</comment>
<comment type="subunit">
    <text evidence="2">The cytochrome bc1 complex contains 11 subunits: 3 respiratory subunits (MT-CYB, CYC1 and UQCRFS1), 2 core proteins (UQCRC1 and UQCRC2) and 6 low-molecular weight proteins (UQCRH/QCR6, UQCRB/QCR7, UQCRQ/QCR8, UQCR10/QCR9, UQCR11/QCR10 and a cleavage product of UQCRFS1). This cytochrome bc1 complex then forms a dimer.</text>
</comment>
<comment type="subcellular location">
    <subcellularLocation>
        <location evidence="2">Mitochondrion inner membrane</location>
        <topology evidence="2">Multi-pass membrane protein</topology>
    </subcellularLocation>
</comment>
<comment type="miscellaneous">
    <text evidence="1">Heme 1 (or BL or b562) is low-potential and absorbs at about 562 nm, and heme 2 (or BH or b566) is high-potential and absorbs at about 566 nm.</text>
</comment>
<comment type="similarity">
    <text evidence="3 4">Belongs to the cytochrome b family.</text>
</comment>
<comment type="caution">
    <text evidence="2">The full-length protein contains only eight transmembrane helices, not nine as predicted by bioinformatics tools.</text>
</comment>
<proteinExistence type="inferred from homology"/>
<accession>Q35516</accession>
<reference key="1">
    <citation type="journal article" date="1996" name="Mol. Phylogenet. Evol.">
        <title>Phylogenetic relationships among the major lineages of the birds-of-paradise (paradisaeidae) using mitochondrial DNA gene sequences.</title>
        <authorList>
            <person name="Nunn G.B."/>
            <person name="Cracraft J."/>
        </authorList>
    </citation>
    <scope>NUCLEOTIDE SEQUENCE [GENOMIC DNA]</scope>
</reference>
<protein>
    <recommendedName>
        <fullName>Cytochrome b</fullName>
    </recommendedName>
    <alternativeName>
        <fullName>Complex III subunit 3</fullName>
    </alternativeName>
    <alternativeName>
        <fullName>Complex III subunit III</fullName>
    </alternativeName>
    <alternativeName>
        <fullName>Cytochrome b-c1 complex subunit 3</fullName>
    </alternativeName>
    <alternativeName>
        <fullName>Ubiquinol-cytochrome-c reductase complex cytochrome b subunit</fullName>
    </alternativeName>
</protein>
<dbReference type="EMBL" id="U25737">
    <property type="protein sequence ID" value="AAB38162.1"/>
    <property type="molecule type" value="Genomic_DNA"/>
</dbReference>
<dbReference type="SMR" id="Q35516"/>
<dbReference type="GO" id="GO:0005743">
    <property type="term" value="C:mitochondrial inner membrane"/>
    <property type="evidence" value="ECO:0007669"/>
    <property type="project" value="UniProtKB-SubCell"/>
</dbReference>
<dbReference type="GO" id="GO:0045275">
    <property type="term" value="C:respiratory chain complex III"/>
    <property type="evidence" value="ECO:0007669"/>
    <property type="project" value="InterPro"/>
</dbReference>
<dbReference type="GO" id="GO:0046872">
    <property type="term" value="F:metal ion binding"/>
    <property type="evidence" value="ECO:0007669"/>
    <property type="project" value="UniProtKB-KW"/>
</dbReference>
<dbReference type="GO" id="GO:0008121">
    <property type="term" value="F:ubiquinol-cytochrome-c reductase activity"/>
    <property type="evidence" value="ECO:0007669"/>
    <property type="project" value="InterPro"/>
</dbReference>
<dbReference type="GO" id="GO:0006122">
    <property type="term" value="P:mitochondrial electron transport, ubiquinol to cytochrome c"/>
    <property type="evidence" value="ECO:0007669"/>
    <property type="project" value="TreeGrafter"/>
</dbReference>
<dbReference type="CDD" id="cd00290">
    <property type="entry name" value="cytochrome_b_C"/>
    <property type="match status" value="1"/>
</dbReference>
<dbReference type="CDD" id="cd00284">
    <property type="entry name" value="Cytochrome_b_N"/>
    <property type="match status" value="1"/>
</dbReference>
<dbReference type="FunFam" id="1.20.810.10:FF:000002">
    <property type="entry name" value="Cytochrome b"/>
    <property type="match status" value="1"/>
</dbReference>
<dbReference type="Gene3D" id="1.20.810.10">
    <property type="entry name" value="Cytochrome Bc1 Complex, Chain C"/>
    <property type="match status" value="1"/>
</dbReference>
<dbReference type="InterPro" id="IPR005798">
    <property type="entry name" value="Cyt_b/b6_C"/>
</dbReference>
<dbReference type="InterPro" id="IPR036150">
    <property type="entry name" value="Cyt_b/b6_C_sf"/>
</dbReference>
<dbReference type="InterPro" id="IPR005797">
    <property type="entry name" value="Cyt_b/b6_N"/>
</dbReference>
<dbReference type="InterPro" id="IPR027387">
    <property type="entry name" value="Cytb/b6-like_sf"/>
</dbReference>
<dbReference type="InterPro" id="IPR030689">
    <property type="entry name" value="Cytochrome_b"/>
</dbReference>
<dbReference type="InterPro" id="IPR048260">
    <property type="entry name" value="Cytochrome_b_C_euk/bac"/>
</dbReference>
<dbReference type="InterPro" id="IPR048259">
    <property type="entry name" value="Cytochrome_b_N_euk/bac"/>
</dbReference>
<dbReference type="InterPro" id="IPR016174">
    <property type="entry name" value="Di-haem_cyt_TM"/>
</dbReference>
<dbReference type="PANTHER" id="PTHR19271">
    <property type="entry name" value="CYTOCHROME B"/>
    <property type="match status" value="1"/>
</dbReference>
<dbReference type="PANTHER" id="PTHR19271:SF16">
    <property type="entry name" value="CYTOCHROME B"/>
    <property type="match status" value="1"/>
</dbReference>
<dbReference type="Pfam" id="PF00032">
    <property type="entry name" value="Cytochrom_B_C"/>
    <property type="match status" value="1"/>
</dbReference>
<dbReference type="Pfam" id="PF00033">
    <property type="entry name" value="Cytochrome_B"/>
    <property type="match status" value="1"/>
</dbReference>
<dbReference type="PIRSF" id="PIRSF038885">
    <property type="entry name" value="COB"/>
    <property type="match status" value="1"/>
</dbReference>
<dbReference type="SUPFAM" id="SSF81648">
    <property type="entry name" value="a domain/subunit of cytochrome bc1 complex (Ubiquinol-cytochrome c reductase)"/>
    <property type="match status" value="1"/>
</dbReference>
<dbReference type="SUPFAM" id="SSF81342">
    <property type="entry name" value="Transmembrane di-heme cytochromes"/>
    <property type="match status" value="1"/>
</dbReference>
<dbReference type="PROSITE" id="PS51003">
    <property type="entry name" value="CYTB_CTER"/>
    <property type="match status" value="1"/>
</dbReference>
<dbReference type="PROSITE" id="PS51002">
    <property type="entry name" value="CYTB_NTER"/>
    <property type="match status" value="1"/>
</dbReference>